<gene>
    <name evidence="1" type="primary">thiG</name>
</gene>
<organism>
    <name type="scientific">Erwinia amylovora</name>
    <name type="common">Fire blight bacteria</name>
    <dbReference type="NCBI Taxonomy" id="552"/>
    <lineage>
        <taxon>Bacteria</taxon>
        <taxon>Pseudomonadati</taxon>
        <taxon>Pseudomonadota</taxon>
        <taxon>Gammaproteobacteria</taxon>
        <taxon>Enterobacterales</taxon>
        <taxon>Erwiniaceae</taxon>
        <taxon>Erwinia</taxon>
    </lineage>
</organism>
<proteinExistence type="inferred from homology"/>
<dbReference type="EC" id="2.8.1.10" evidence="1"/>
<dbReference type="EMBL" id="AF264948">
    <property type="protein sequence ID" value="AAG31045.1"/>
    <property type="molecule type" value="Genomic_DNA"/>
</dbReference>
<dbReference type="EMBL" id="AH009976">
    <property type="protein sequence ID" value="AAG31740.1"/>
    <property type="molecule type" value="Genomic_DNA"/>
</dbReference>
<dbReference type="RefSeq" id="NP_981994.1">
    <property type="nucleotide sequence ID" value="NC_005706.1"/>
</dbReference>
<dbReference type="RefSeq" id="WP_009351653.1">
    <property type="nucleotide sequence ID" value="NZ_RQKG01000022.1"/>
</dbReference>
<dbReference type="RefSeq" id="WP_011167228.1">
    <property type="nucleotide sequence ID" value="NC_005706.1"/>
</dbReference>
<dbReference type="SMR" id="Q9F812"/>
<dbReference type="OMA" id="PHNFQLI"/>
<dbReference type="UniPathway" id="UPA00060"/>
<dbReference type="PRO" id="PR:Q9F812"/>
<dbReference type="GO" id="GO:0005737">
    <property type="term" value="C:cytoplasm"/>
    <property type="evidence" value="ECO:0007669"/>
    <property type="project" value="UniProtKB-SubCell"/>
</dbReference>
<dbReference type="GO" id="GO:1990107">
    <property type="term" value="F:thiazole synthase activity"/>
    <property type="evidence" value="ECO:0007669"/>
    <property type="project" value="UniProtKB-EC"/>
</dbReference>
<dbReference type="GO" id="GO:0009229">
    <property type="term" value="P:thiamine diphosphate biosynthetic process"/>
    <property type="evidence" value="ECO:0007669"/>
    <property type="project" value="UniProtKB-UniRule"/>
</dbReference>
<dbReference type="CDD" id="cd04728">
    <property type="entry name" value="ThiG"/>
    <property type="match status" value="1"/>
</dbReference>
<dbReference type="Gene3D" id="3.20.20.70">
    <property type="entry name" value="Aldolase class I"/>
    <property type="match status" value="1"/>
</dbReference>
<dbReference type="HAMAP" id="MF_00443">
    <property type="entry name" value="ThiG"/>
    <property type="match status" value="1"/>
</dbReference>
<dbReference type="InterPro" id="IPR013785">
    <property type="entry name" value="Aldolase_TIM"/>
</dbReference>
<dbReference type="InterPro" id="IPR033983">
    <property type="entry name" value="Thiazole_synthase_ThiG"/>
</dbReference>
<dbReference type="InterPro" id="IPR008867">
    <property type="entry name" value="ThiG"/>
</dbReference>
<dbReference type="PANTHER" id="PTHR34266">
    <property type="entry name" value="THIAZOLE SYNTHASE"/>
    <property type="match status" value="1"/>
</dbReference>
<dbReference type="PANTHER" id="PTHR34266:SF2">
    <property type="entry name" value="THIAZOLE SYNTHASE"/>
    <property type="match status" value="1"/>
</dbReference>
<dbReference type="Pfam" id="PF05690">
    <property type="entry name" value="ThiG"/>
    <property type="match status" value="1"/>
</dbReference>
<dbReference type="SUPFAM" id="SSF110399">
    <property type="entry name" value="ThiG-like"/>
    <property type="match status" value="1"/>
</dbReference>
<comment type="function">
    <text evidence="1">Catalyzes the rearrangement of 1-deoxy-D-xylulose 5-phosphate (DXP) to produce the thiazole phosphate moiety of thiamine. Sulfur is provided by the thiocarboxylate moiety of the carrier protein ThiS. In vitro, sulfur can be provided by H(2)S.</text>
</comment>
<comment type="catalytic activity">
    <reaction evidence="1">
        <text>[ThiS sulfur-carrier protein]-C-terminal-Gly-aminoethanethioate + 2-iminoacetate + 1-deoxy-D-xylulose 5-phosphate = [ThiS sulfur-carrier protein]-C-terminal Gly-Gly + 2-[(2R,5Z)-2-carboxy-4-methylthiazol-5(2H)-ylidene]ethyl phosphate + 2 H2O + H(+)</text>
        <dbReference type="Rhea" id="RHEA:26297"/>
        <dbReference type="Rhea" id="RHEA-COMP:12909"/>
        <dbReference type="Rhea" id="RHEA-COMP:19908"/>
        <dbReference type="ChEBI" id="CHEBI:15377"/>
        <dbReference type="ChEBI" id="CHEBI:15378"/>
        <dbReference type="ChEBI" id="CHEBI:57792"/>
        <dbReference type="ChEBI" id="CHEBI:62899"/>
        <dbReference type="ChEBI" id="CHEBI:77846"/>
        <dbReference type="ChEBI" id="CHEBI:90778"/>
        <dbReference type="ChEBI" id="CHEBI:232372"/>
        <dbReference type="EC" id="2.8.1.10"/>
    </reaction>
</comment>
<comment type="pathway">
    <text evidence="1">Cofactor biosynthesis; thiamine diphosphate biosynthesis.</text>
</comment>
<comment type="subunit">
    <text evidence="1">Homotetramer. Forms heterodimers with either ThiH or ThiS.</text>
</comment>
<comment type="subcellular location">
    <subcellularLocation>
        <location evidence="1">Cytoplasm</location>
    </subcellularLocation>
</comment>
<comment type="similarity">
    <text evidence="1">Belongs to the ThiG family.</text>
</comment>
<sequence length="252" mass="27201">MFYDFVPQSRFLLGTAGYPSPQILQQAIEASGSEIITVSLRREGSQGGAFRALLTQLNKRVLPNTAGCHTVKEAVTTAYMARELFNTRWIKLEVIGHADTLQPDPFALVEAARILCADGFQVFPYTTEDLILGEKLLEAGCKLLMPWGAPIGSGQGLRNIEGLRSMRSWFKDIPLIIDAGIGAPSQAAQAMEMGFDGILLNTAVARAQDPLGMAQAFASAIRAGYDARSAGLIERRDMATASTPIFGMAQFS</sequence>
<feature type="chain" id="PRO_0000162818" description="Thiazole synthase">
    <location>
        <begin position="1"/>
        <end position="252"/>
    </location>
</feature>
<feature type="active site" description="Schiff-base intermediate with DXP" evidence="1">
    <location>
        <position position="91"/>
    </location>
</feature>
<feature type="binding site" evidence="1">
    <location>
        <position position="152"/>
    </location>
    <ligand>
        <name>1-deoxy-D-xylulose 5-phosphate</name>
        <dbReference type="ChEBI" id="CHEBI:57792"/>
    </ligand>
</feature>
<feature type="binding site" evidence="1">
    <location>
        <begin position="179"/>
        <end position="180"/>
    </location>
    <ligand>
        <name>1-deoxy-D-xylulose 5-phosphate</name>
        <dbReference type="ChEBI" id="CHEBI:57792"/>
    </ligand>
</feature>
<feature type="binding site" evidence="1">
    <location>
        <begin position="201"/>
        <end position="202"/>
    </location>
    <ligand>
        <name>1-deoxy-D-xylulose 5-phosphate</name>
        <dbReference type="ChEBI" id="CHEBI:57792"/>
    </ligand>
</feature>
<protein>
    <recommendedName>
        <fullName evidence="1">Thiazole synthase</fullName>
        <ecNumber evidence="1">2.8.1.10</ecNumber>
    </recommendedName>
</protein>
<reference key="1">
    <citation type="journal article" date="2000" name="Appl. Environ. Microbiol.">
        <title>Complete nucleotide sequence of ubiquitous plasmid pEA29 from Erwinia amylovora strain Ea88: gene organization and intraspecies variation.</title>
        <authorList>
            <person name="McGhee G.C."/>
            <person name="Jones A.L."/>
        </authorList>
    </citation>
    <scope>NUCLEOTIDE SEQUENCE [GENOMIC DNA]</scope>
    <source>
        <strain>2-95</strain>
        <strain>Ea88</strain>
    </source>
</reference>
<keyword id="KW-0963">Cytoplasm</keyword>
<keyword id="KW-0614">Plasmid</keyword>
<keyword id="KW-0704">Schiff base</keyword>
<keyword id="KW-0784">Thiamine biosynthesis</keyword>
<keyword id="KW-0808">Transferase</keyword>
<geneLocation type="plasmid">
    <name>pEA29</name>
</geneLocation>
<accession>Q9F812</accession>
<accession>Q9F7Z7</accession>
<evidence type="ECO:0000255" key="1">
    <source>
        <dbReference type="HAMAP-Rule" id="MF_00443"/>
    </source>
</evidence>
<name>THIG_ERWAM</name>